<sequence length="469" mass="53156">MIHVYNTLSREKEAFHAITPGKVNMYVCGPTVYNYIHIGNARSAIAFDVIRRYLEYSGYVVNYVSNFTDVDDKIIQRAREEGVDEMTIADKYAQAFDEDTIPLNIKPATTRSRATAVIPDIIAFVEDLIHKGYAYESAGDVYFRAKKFKGYGILAHQDLAEMEANAAGRLDDQELTRKEDPIDFAVWKASHSSDEISWVSPWGKGRPGWHIECSVMAQKYLADTIDIHGGGIDLAFPHHTNEIAQSEARTGQTFVNYWLHNGFVNVNDEKMSKSLGNFTTVHDMLAHYDDPMVIRYLLATTQYRRPINYAPDTLEQARAELERIRTAYRNVFFRISTAKTGHDDSVDYAIAEHISHFREAMDDDFNTQNAIASIFELVTIANNYASRDEIKLDTATRLTHAIADLMNVFGVNGLSEHLTLSAEAQALLDKRVQARAVRDFNLSDQLRDQLSDMGIIVEDTTQGQRWHHA</sequence>
<reference key="1">
    <citation type="journal article" date="2008" name="J. Bacteriol.">
        <title>Complete genome sequence of Leuconostoc citreum KM20.</title>
        <authorList>
            <person name="Kim J.F."/>
            <person name="Jeong H."/>
            <person name="Lee J.-S."/>
            <person name="Choi S.-H."/>
            <person name="Ha M."/>
            <person name="Hur C.-G."/>
            <person name="Kim J.-S."/>
            <person name="Lee S."/>
            <person name="Park H.-S."/>
            <person name="Park Y.-H."/>
            <person name="Oh T.K."/>
        </authorList>
    </citation>
    <scope>NUCLEOTIDE SEQUENCE [LARGE SCALE GENOMIC DNA]</scope>
    <source>
        <strain>KM20</strain>
    </source>
</reference>
<keyword id="KW-0030">Aminoacyl-tRNA synthetase</keyword>
<keyword id="KW-0067">ATP-binding</keyword>
<keyword id="KW-0963">Cytoplasm</keyword>
<keyword id="KW-0436">Ligase</keyword>
<keyword id="KW-0479">Metal-binding</keyword>
<keyword id="KW-0547">Nucleotide-binding</keyword>
<keyword id="KW-0648">Protein biosynthesis</keyword>
<keyword id="KW-1185">Reference proteome</keyword>
<keyword id="KW-0862">Zinc</keyword>
<dbReference type="EC" id="6.1.1.16" evidence="1"/>
<dbReference type="EMBL" id="DQ489736">
    <property type="protein sequence ID" value="ACA83433.1"/>
    <property type="molecule type" value="Genomic_DNA"/>
</dbReference>
<dbReference type="RefSeq" id="WP_004908793.1">
    <property type="nucleotide sequence ID" value="NC_010471.1"/>
</dbReference>
<dbReference type="SMR" id="B1MW68"/>
<dbReference type="STRING" id="349519.LCK_01610"/>
<dbReference type="KEGG" id="lci:LCK_01610"/>
<dbReference type="eggNOG" id="COG0215">
    <property type="taxonomic scope" value="Bacteria"/>
</dbReference>
<dbReference type="HOGENOM" id="CLU_013528_0_1_9"/>
<dbReference type="OrthoDB" id="9815130at2"/>
<dbReference type="Proteomes" id="UP000002166">
    <property type="component" value="Chromosome"/>
</dbReference>
<dbReference type="GO" id="GO:0005829">
    <property type="term" value="C:cytosol"/>
    <property type="evidence" value="ECO:0007669"/>
    <property type="project" value="TreeGrafter"/>
</dbReference>
<dbReference type="GO" id="GO:0005524">
    <property type="term" value="F:ATP binding"/>
    <property type="evidence" value="ECO:0007669"/>
    <property type="project" value="UniProtKB-UniRule"/>
</dbReference>
<dbReference type="GO" id="GO:0004817">
    <property type="term" value="F:cysteine-tRNA ligase activity"/>
    <property type="evidence" value="ECO:0007669"/>
    <property type="project" value="UniProtKB-UniRule"/>
</dbReference>
<dbReference type="GO" id="GO:0008270">
    <property type="term" value="F:zinc ion binding"/>
    <property type="evidence" value="ECO:0007669"/>
    <property type="project" value="UniProtKB-UniRule"/>
</dbReference>
<dbReference type="GO" id="GO:0006423">
    <property type="term" value="P:cysteinyl-tRNA aminoacylation"/>
    <property type="evidence" value="ECO:0007669"/>
    <property type="project" value="UniProtKB-UniRule"/>
</dbReference>
<dbReference type="CDD" id="cd00672">
    <property type="entry name" value="CysRS_core"/>
    <property type="match status" value="1"/>
</dbReference>
<dbReference type="FunFam" id="3.40.50.620:FF:000130">
    <property type="entry name" value="Cysteine--tRNA ligase"/>
    <property type="match status" value="1"/>
</dbReference>
<dbReference type="Gene3D" id="1.20.120.1910">
    <property type="entry name" value="Cysteine-tRNA ligase, C-terminal anti-codon recognition domain"/>
    <property type="match status" value="1"/>
</dbReference>
<dbReference type="Gene3D" id="3.40.50.620">
    <property type="entry name" value="HUPs"/>
    <property type="match status" value="1"/>
</dbReference>
<dbReference type="HAMAP" id="MF_00041">
    <property type="entry name" value="Cys_tRNA_synth"/>
    <property type="match status" value="1"/>
</dbReference>
<dbReference type="InterPro" id="IPR015803">
    <property type="entry name" value="Cys-tRNA-ligase"/>
</dbReference>
<dbReference type="InterPro" id="IPR015273">
    <property type="entry name" value="Cys-tRNA-synt_Ia_DALR"/>
</dbReference>
<dbReference type="InterPro" id="IPR024909">
    <property type="entry name" value="Cys-tRNA/MSH_ligase"/>
</dbReference>
<dbReference type="InterPro" id="IPR056411">
    <property type="entry name" value="CysS_C"/>
</dbReference>
<dbReference type="InterPro" id="IPR014729">
    <property type="entry name" value="Rossmann-like_a/b/a_fold"/>
</dbReference>
<dbReference type="InterPro" id="IPR032678">
    <property type="entry name" value="tRNA-synt_1_cat_dom"/>
</dbReference>
<dbReference type="InterPro" id="IPR009080">
    <property type="entry name" value="tRNAsynth_Ia_anticodon-bd"/>
</dbReference>
<dbReference type="NCBIfam" id="TIGR00435">
    <property type="entry name" value="cysS"/>
    <property type="match status" value="1"/>
</dbReference>
<dbReference type="PANTHER" id="PTHR10890:SF3">
    <property type="entry name" value="CYSTEINE--TRNA LIGASE, CYTOPLASMIC"/>
    <property type="match status" value="1"/>
</dbReference>
<dbReference type="PANTHER" id="PTHR10890">
    <property type="entry name" value="CYSTEINYL-TRNA SYNTHETASE"/>
    <property type="match status" value="1"/>
</dbReference>
<dbReference type="Pfam" id="PF23493">
    <property type="entry name" value="CysS_C"/>
    <property type="match status" value="1"/>
</dbReference>
<dbReference type="Pfam" id="PF09190">
    <property type="entry name" value="DALR_2"/>
    <property type="match status" value="1"/>
</dbReference>
<dbReference type="Pfam" id="PF01406">
    <property type="entry name" value="tRNA-synt_1e"/>
    <property type="match status" value="1"/>
</dbReference>
<dbReference type="PRINTS" id="PR00983">
    <property type="entry name" value="TRNASYNTHCYS"/>
</dbReference>
<dbReference type="SMART" id="SM00840">
    <property type="entry name" value="DALR_2"/>
    <property type="match status" value="1"/>
</dbReference>
<dbReference type="SUPFAM" id="SSF47323">
    <property type="entry name" value="Anticodon-binding domain of a subclass of class I aminoacyl-tRNA synthetases"/>
    <property type="match status" value="1"/>
</dbReference>
<dbReference type="SUPFAM" id="SSF52374">
    <property type="entry name" value="Nucleotidylyl transferase"/>
    <property type="match status" value="1"/>
</dbReference>
<comment type="catalytic activity">
    <reaction evidence="1">
        <text>tRNA(Cys) + L-cysteine + ATP = L-cysteinyl-tRNA(Cys) + AMP + diphosphate</text>
        <dbReference type="Rhea" id="RHEA:17773"/>
        <dbReference type="Rhea" id="RHEA-COMP:9661"/>
        <dbReference type="Rhea" id="RHEA-COMP:9679"/>
        <dbReference type="ChEBI" id="CHEBI:30616"/>
        <dbReference type="ChEBI" id="CHEBI:33019"/>
        <dbReference type="ChEBI" id="CHEBI:35235"/>
        <dbReference type="ChEBI" id="CHEBI:78442"/>
        <dbReference type="ChEBI" id="CHEBI:78517"/>
        <dbReference type="ChEBI" id="CHEBI:456215"/>
        <dbReference type="EC" id="6.1.1.16"/>
    </reaction>
</comment>
<comment type="cofactor">
    <cofactor evidence="1">
        <name>Zn(2+)</name>
        <dbReference type="ChEBI" id="CHEBI:29105"/>
    </cofactor>
    <text evidence="1">Binds 1 zinc ion per subunit.</text>
</comment>
<comment type="subunit">
    <text evidence="1">Monomer.</text>
</comment>
<comment type="subcellular location">
    <subcellularLocation>
        <location evidence="1">Cytoplasm</location>
    </subcellularLocation>
</comment>
<comment type="similarity">
    <text evidence="1">Belongs to the class-I aminoacyl-tRNA synthetase family.</text>
</comment>
<accession>B1MW68</accession>
<name>SYC_LEUCK</name>
<evidence type="ECO:0000255" key="1">
    <source>
        <dbReference type="HAMAP-Rule" id="MF_00041"/>
    </source>
</evidence>
<proteinExistence type="inferred from homology"/>
<gene>
    <name evidence="1" type="primary">cysS</name>
    <name type="ordered locus">LCK_01610</name>
</gene>
<feature type="chain" id="PRO_1000199074" description="Cysteine--tRNA ligase">
    <location>
        <begin position="1"/>
        <end position="469"/>
    </location>
</feature>
<feature type="short sequence motif" description="'HIGH' region">
    <location>
        <begin position="30"/>
        <end position="40"/>
    </location>
</feature>
<feature type="short sequence motif" description="'KMSKS' region">
    <location>
        <begin position="270"/>
        <end position="274"/>
    </location>
</feature>
<feature type="binding site" evidence="1">
    <location>
        <position position="28"/>
    </location>
    <ligand>
        <name>Zn(2+)</name>
        <dbReference type="ChEBI" id="CHEBI:29105"/>
    </ligand>
</feature>
<feature type="binding site" evidence="1">
    <location>
        <position position="213"/>
    </location>
    <ligand>
        <name>Zn(2+)</name>
        <dbReference type="ChEBI" id="CHEBI:29105"/>
    </ligand>
</feature>
<feature type="binding site" evidence="1">
    <location>
        <position position="238"/>
    </location>
    <ligand>
        <name>Zn(2+)</name>
        <dbReference type="ChEBI" id="CHEBI:29105"/>
    </ligand>
</feature>
<feature type="binding site" evidence="1">
    <location>
        <position position="242"/>
    </location>
    <ligand>
        <name>Zn(2+)</name>
        <dbReference type="ChEBI" id="CHEBI:29105"/>
    </ligand>
</feature>
<feature type="binding site" evidence="1">
    <location>
        <position position="273"/>
    </location>
    <ligand>
        <name>ATP</name>
        <dbReference type="ChEBI" id="CHEBI:30616"/>
    </ligand>
</feature>
<organism>
    <name type="scientific">Leuconostoc citreum (strain KM20)</name>
    <dbReference type="NCBI Taxonomy" id="349519"/>
    <lineage>
        <taxon>Bacteria</taxon>
        <taxon>Bacillati</taxon>
        <taxon>Bacillota</taxon>
        <taxon>Bacilli</taxon>
        <taxon>Lactobacillales</taxon>
        <taxon>Lactobacillaceae</taxon>
        <taxon>Leuconostoc</taxon>
    </lineage>
</organism>
<protein>
    <recommendedName>
        <fullName evidence="1">Cysteine--tRNA ligase</fullName>
        <ecNumber evidence="1">6.1.1.16</ecNumber>
    </recommendedName>
    <alternativeName>
        <fullName evidence="1">Cysteinyl-tRNA synthetase</fullName>
        <shortName evidence="1">CysRS</shortName>
    </alternativeName>
</protein>